<feature type="chain" id="PRO_1000006008" description="DNA-directed RNA polymerase subunit omega">
    <location>
        <begin position="1"/>
        <end position="92"/>
    </location>
</feature>
<accession>A6WI83</accession>
<dbReference type="EC" id="2.7.7.6" evidence="1"/>
<dbReference type="EMBL" id="CP000753">
    <property type="protein sequence ID" value="ABS06522.1"/>
    <property type="molecule type" value="Genomic_DNA"/>
</dbReference>
<dbReference type="RefSeq" id="WP_006079841.1">
    <property type="nucleotide sequence ID" value="NC_009665.1"/>
</dbReference>
<dbReference type="SMR" id="A6WI83"/>
<dbReference type="GeneID" id="11770701"/>
<dbReference type="KEGG" id="sbm:Shew185_0352"/>
<dbReference type="HOGENOM" id="CLU_125406_5_3_6"/>
<dbReference type="GO" id="GO:0000428">
    <property type="term" value="C:DNA-directed RNA polymerase complex"/>
    <property type="evidence" value="ECO:0007669"/>
    <property type="project" value="UniProtKB-KW"/>
</dbReference>
<dbReference type="GO" id="GO:0003677">
    <property type="term" value="F:DNA binding"/>
    <property type="evidence" value="ECO:0007669"/>
    <property type="project" value="UniProtKB-UniRule"/>
</dbReference>
<dbReference type="GO" id="GO:0003899">
    <property type="term" value="F:DNA-directed RNA polymerase activity"/>
    <property type="evidence" value="ECO:0007669"/>
    <property type="project" value="UniProtKB-UniRule"/>
</dbReference>
<dbReference type="GO" id="GO:0006351">
    <property type="term" value="P:DNA-templated transcription"/>
    <property type="evidence" value="ECO:0007669"/>
    <property type="project" value="UniProtKB-UniRule"/>
</dbReference>
<dbReference type="Gene3D" id="3.90.940.10">
    <property type="match status" value="1"/>
</dbReference>
<dbReference type="HAMAP" id="MF_00366">
    <property type="entry name" value="RNApol_bact_RpoZ"/>
    <property type="match status" value="1"/>
</dbReference>
<dbReference type="InterPro" id="IPR003716">
    <property type="entry name" value="DNA-dir_RNA_pol_omega"/>
</dbReference>
<dbReference type="InterPro" id="IPR006110">
    <property type="entry name" value="Pol_omega/Rpo6/RPB6"/>
</dbReference>
<dbReference type="InterPro" id="IPR036161">
    <property type="entry name" value="RPB6/omega-like_sf"/>
</dbReference>
<dbReference type="NCBIfam" id="TIGR00690">
    <property type="entry name" value="rpoZ"/>
    <property type="match status" value="1"/>
</dbReference>
<dbReference type="PANTHER" id="PTHR34476">
    <property type="entry name" value="DNA-DIRECTED RNA POLYMERASE SUBUNIT OMEGA"/>
    <property type="match status" value="1"/>
</dbReference>
<dbReference type="PANTHER" id="PTHR34476:SF1">
    <property type="entry name" value="DNA-DIRECTED RNA POLYMERASE SUBUNIT OMEGA"/>
    <property type="match status" value="1"/>
</dbReference>
<dbReference type="Pfam" id="PF01192">
    <property type="entry name" value="RNA_pol_Rpb6"/>
    <property type="match status" value="1"/>
</dbReference>
<dbReference type="SMART" id="SM01409">
    <property type="entry name" value="RNA_pol_Rpb6"/>
    <property type="match status" value="1"/>
</dbReference>
<dbReference type="SUPFAM" id="SSF63562">
    <property type="entry name" value="RPB6/omega subunit-like"/>
    <property type="match status" value="1"/>
</dbReference>
<proteinExistence type="inferred from homology"/>
<name>RPOZ_SHEB8</name>
<sequence length="92" mass="10141">MARVTVEDAVEQIGNRFDMILVAARRARQIAVQGKDPMVEEMNDKPTVIALREIELGLVNAHTLDADERQTVREREAAEIAAVSAIAEGRSL</sequence>
<protein>
    <recommendedName>
        <fullName evidence="1">DNA-directed RNA polymerase subunit omega</fullName>
        <shortName evidence="1">RNAP omega subunit</shortName>
        <ecNumber evidence="1">2.7.7.6</ecNumber>
    </recommendedName>
    <alternativeName>
        <fullName evidence="1">RNA polymerase omega subunit</fullName>
    </alternativeName>
    <alternativeName>
        <fullName evidence="1">Transcriptase subunit omega</fullName>
    </alternativeName>
</protein>
<keyword id="KW-0240">DNA-directed RNA polymerase</keyword>
<keyword id="KW-0548">Nucleotidyltransferase</keyword>
<keyword id="KW-0804">Transcription</keyword>
<keyword id="KW-0808">Transferase</keyword>
<comment type="function">
    <text evidence="1">Promotes RNA polymerase assembly. Latches the N- and C-terminal regions of the beta' subunit thereby facilitating its interaction with the beta and alpha subunits.</text>
</comment>
<comment type="catalytic activity">
    <reaction evidence="1">
        <text>RNA(n) + a ribonucleoside 5'-triphosphate = RNA(n+1) + diphosphate</text>
        <dbReference type="Rhea" id="RHEA:21248"/>
        <dbReference type="Rhea" id="RHEA-COMP:14527"/>
        <dbReference type="Rhea" id="RHEA-COMP:17342"/>
        <dbReference type="ChEBI" id="CHEBI:33019"/>
        <dbReference type="ChEBI" id="CHEBI:61557"/>
        <dbReference type="ChEBI" id="CHEBI:140395"/>
        <dbReference type="EC" id="2.7.7.6"/>
    </reaction>
</comment>
<comment type="subunit">
    <text evidence="1">The RNAP catalytic core consists of 2 alpha, 1 beta, 1 beta' and 1 omega subunit. When a sigma factor is associated with the core the holoenzyme is formed, which can initiate transcription.</text>
</comment>
<comment type="similarity">
    <text evidence="1">Belongs to the RNA polymerase subunit omega family.</text>
</comment>
<gene>
    <name evidence="1" type="primary">rpoZ</name>
    <name type="ordered locus">Shew185_0352</name>
</gene>
<evidence type="ECO:0000255" key="1">
    <source>
        <dbReference type="HAMAP-Rule" id="MF_00366"/>
    </source>
</evidence>
<reference key="1">
    <citation type="submission" date="2007-07" db="EMBL/GenBank/DDBJ databases">
        <title>Complete sequence of chromosome of Shewanella baltica OS185.</title>
        <authorList>
            <consortium name="US DOE Joint Genome Institute"/>
            <person name="Copeland A."/>
            <person name="Lucas S."/>
            <person name="Lapidus A."/>
            <person name="Barry K."/>
            <person name="Glavina del Rio T."/>
            <person name="Dalin E."/>
            <person name="Tice H."/>
            <person name="Pitluck S."/>
            <person name="Sims D."/>
            <person name="Brettin T."/>
            <person name="Bruce D."/>
            <person name="Detter J.C."/>
            <person name="Han C."/>
            <person name="Schmutz J."/>
            <person name="Larimer F."/>
            <person name="Land M."/>
            <person name="Hauser L."/>
            <person name="Kyrpides N."/>
            <person name="Mikhailova N."/>
            <person name="Brettar I."/>
            <person name="Rodrigues J."/>
            <person name="Konstantinidis K."/>
            <person name="Tiedje J."/>
            <person name="Richardson P."/>
        </authorList>
    </citation>
    <scope>NUCLEOTIDE SEQUENCE [LARGE SCALE GENOMIC DNA]</scope>
    <source>
        <strain>OS185</strain>
    </source>
</reference>
<organism>
    <name type="scientific">Shewanella baltica (strain OS185)</name>
    <dbReference type="NCBI Taxonomy" id="402882"/>
    <lineage>
        <taxon>Bacteria</taxon>
        <taxon>Pseudomonadati</taxon>
        <taxon>Pseudomonadota</taxon>
        <taxon>Gammaproteobacteria</taxon>
        <taxon>Alteromonadales</taxon>
        <taxon>Shewanellaceae</taxon>
        <taxon>Shewanella</taxon>
    </lineage>
</organism>